<sequence>MADFTKFLTTAPVAFILFSSFVFALFIEINRFFPDILTF</sequence>
<dbReference type="EMBL" id="CP000240">
    <property type="protein sequence ID" value="ABD03748.1"/>
    <property type="molecule type" value="Genomic_DNA"/>
</dbReference>
<dbReference type="RefSeq" id="WP_011434365.1">
    <property type="nucleotide sequence ID" value="NC_007776.1"/>
</dbReference>
<dbReference type="SMR" id="Q2JI23"/>
<dbReference type="STRING" id="321332.CYB_2825"/>
<dbReference type="KEGG" id="cyb:CYB_2825"/>
<dbReference type="eggNOG" id="ENOG5032PDU">
    <property type="taxonomic scope" value="Bacteria"/>
</dbReference>
<dbReference type="HOGENOM" id="CLU_212133_1_0_3"/>
<dbReference type="OrthoDB" id="532702at2"/>
<dbReference type="Proteomes" id="UP000001938">
    <property type="component" value="Chromosome"/>
</dbReference>
<dbReference type="GO" id="GO:0009522">
    <property type="term" value="C:photosystem I"/>
    <property type="evidence" value="ECO:0007669"/>
    <property type="project" value="UniProtKB-KW"/>
</dbReference>
<dbReference type="GO" id="GO:0031676">
    <property type="term" value="C:plasma membrane-derived thylakoid membrane"/>
    <property type="evidence" value="ECO:0007669"/>
    <property type="project" value="UniProtKB-SubCell"/>
</dbReference>
<dbReference type="GO" id="GO:0015979">
    <property type="term" value="P:photosynthesis"/>
    <property type="evidence" value="ECO:0007669"/>
    <property type="project" value="UniProtKB-UniRule"/>
</dbReference>
<dbReference type="Gene3D" id="1.20.5.510">
    <property type="entry name" value="Single helix bin"/>
    <property type="match status" value="1"/>
</dbReference>
<dbReference type="HAMAP" id="MF_00522">
    <property type="entry name" value="PSI_PsaJ"/>
    <property type="match status" value="1"/>
</dbReference>
<dbReference type="InterPro" id="IPR002615">
    <property type="entry name" value="PSI_PsaJ"/>
</dbReference>
<dbReference type="InterPro" id="IPR036062">
    <property type="entry name" value="PSI_PsaJ_sf"/>
</dbReference>
<dbReference type="Pfam" id="PF01701">
    <property type="entry name" value="PSI_PsaJ"/>
    <property type="match status" value="1"/>
</dbReference>
<dbReference type="SUPFAM" id="SSF81544">
    <property type="entry name" value="Subunit IX of photosystem I reaction centre, PsaJ"/>
    <property type="match status" value="1"/>
</dbReference>
<gene>
    <name evidence="1" type="primary">psaJ</name>
    <name type="ordered locus">CYB_2825</name>
</gene>
<feature type="chain" id="PRO_0000354120" description="Photosystem I reaction center subunit IX">
    <location>
        <begin position="1"/>
        <end position="39"/>
    </location>
</feature>
<feature type="transmembrane region" description="Helical" evidence="1">
    <location>
        <begin position="7"/>
        <end position="27"/>
    </location>
</feature>
<name>PSAJ_SYNJB</name>
<accession>Q2JI23</accession>
<organism>
    <name type="scientific">Synechococcus sp. (strain JA-2-3B'a(2-13))</name>
    <name type="common">Cyanobacteria bacterium Yellowstone B-Prime</name>
    <dbReference type="NCBI Taxonomy" id="321332"/>
    <lineage>
        <taxon>Bacteria</taxon>
        <taxon>Bacillati</taxon>
        <taxon>Cyanobacteriota</taxon>
        <taxon>Cyanophyceae</taxon>
        <taxon>Synechococcales</taxon>
        <taxon>Synechococcaceae</taxon>
        <taxon>Synechococcus</taxon>
    </lineage>
</organism>
<reference key="1">
    <citation type="journal article" date="2007" name="ISME J.">
        <title>Population level functional diversity in a microbial community revealed by comparative genomic and metagenomic analyses.</title>
        <authorList>
            <person name="Bhaya D."/>
            <person name="Grossman A.R."/>
            <person name="Steunou A.-S."/>
            <person name="Khuri N."/>
            <person name="Cohan F.M."/>
            <person name="Hamamura N."/>
            <person name="Melendrez M.C."/>
            <person name="Bateson M.M."/>
            <person name="Ward D.M."/>
            <person name="Heidelberg J.F."/>
        </authorList>
    </citation>
    <scope>NUCLEOTIDE SEQUENCE [LARGE SCALE GENOMIC DNA]</scope>
    <source>
        <strain>JA-2-3B'a(2-13)</strain>
    </source>
</reference>
<evidence type="ECO:0000255" key="1">
    <source>
        <dbReference type="HAMAP-Rule" id="MF_00522"/>
    </source>
</evidence>
<keyword id="KW-0472">Membrane</keyword>
<keyword id="KW-0602">Photosynthesis</keyword>
<keyword id="KW-0603">Photosystem I</keyword>
<keyword id="KW-1185">Reference proteome</keyword>
<keyword id="KW-0793">Thylakoid</keyword>
<keyword id="KW-0812">Transmembrane</keyword>
<keyword id="KW-1133">Transmembrane helix</keyword>
<protein>
    <recommendedName>
        <fullName evidence="1">Photosystem I reaction center subunit IX</fullName>
    </recommendedName>
</protein>
<proteinExistence type="inferred from homology"/>
<comment type="function">
    <text evidence="1">May help in the organization of the PsaE and PsaF subunits.</text>
</comment>
<comment type="subcellular location">
    <subcellularLocation>
        <location evidence="1">Cellular thylakoid membrane</location>
        <topology evidence="1">Single-pass membrane protein</topology>
    </subcellularLocation>
</comment>
<comment type="similarity">
    <text evidence="1">Belongs to the PsaJ family.</text>
</comment>